<proteinExistence type="evidence at protein level"/>
<comment type="function">
    <text>Cytochromes P450 are a group of heme-thiolate monooxygenases. They oxidize a variety of structurally unrelated compounds, including steroids, fatty acids, and xenobiotics.</text>
</comment>
<comment type="cofactor">
    <cofactor evidence="1">
        <name>heme</name>
        <dbReference type="ChEBI" id="CHEBI:30413"/>
    </cofactor>
</comment>
<comment type="subcellular location">
    <subcellularLocation>
        <location evidence="1">Cytoplasm</location>
    </subcellularLocation>
</comment>
<comment type="similarity">
    <text evidence="2">Belongs to the cytochrome P450 family.</text>
</comment>
<keyword id="KW-0963">Cytoplasm</keyword>
<keyword id="KW-0903">Direct protein sequencing</keyword>
<keyword id="KW-0349">Heme</keyword>
<keyword id="KW-0408">Iron</keyword>
<keyword id="KW-0479">Metal-binding</keyword>
<keyword id="KW-0503">Monooxygenase</keyword>
<keyword id="KW-0560">Oxidoreductase</keyword>
<accession>P14762</accession>
<gene>
    <name type="primary">cyp106</name>
</gene>
<organism>
    <name type="scientific">Priestia megaterium (strain ATCC 14581 / DSM 32 / CCUG 1817 / JCM 2506 / NBRC 15308 / NCIMB 9376 / NCTC 10342 / NRRL B-14308 / VKM B-512 / Ford 19)</name>
    <name type="common">Bacillus megaterium</name>
    <dbReference type="NCBI Taxonomy" id="1348623"/>
    <lineage>
        <taxon>Bacteria</taxon>
        <taxon>Bacillati</taxon>
        <taxon>Bacillota</taxon>
        <taxon>Bacilli</taxon>
        <taxon>Bacillales</taxon>
        <taxon>Bacillaceae</taxon>
        <taxon>Priestia</taxon>
    </lineage>
</organism>
<name>CPXI_PRIM2</name>
<evidence type="ECO:0000250" key="1"/>
<evidence type="ECO:0000305" key="2"/>
<feature type="chain" id="PRO_0000052218" description="Cytochrome P450(BM-1)">
    <location>
        <begin position="1"/>
        <end position="410"/>
    </location>
</feature>
<feature type="binding site" description="axial binding residue">
    <location>
        <position position="356"/>
    </location>
    <ligand>
        <name>heme</name>
        <dbReference type="ChEBI" id="CHEBI:30413"/>
    </ligand>
    <ligandPart>
        <name>Fe</name>
        <dbReference type="ChEBI" id="CHEBI:18248"/>
    </ligandPart>
</feature>
<dbReference type="EC" id="1.14.14.-"/>
<dbReference type="EMBL" id="X16610">
    <property type="protein sequence ID" value="CAA34612.1"/>
    <property type="molecule type" value="Genomic_DNA"/>
</dbReference>
<dbReference type="EMBL" id="S79230">
    <property type="protein sequence ID" value="AAC60495.1"/>
    <property type="molecule type" value="mRNA"/>
</dbReference>
<dbReference type="PIR" id="S07764">
    <property type="entry name" value="O4BS6M"/>
</dbReference>
<dbReference type="RefSeq" id="WP_034652854.1">
    <property type="nucleotide sequence ID" value="NZ_BCVB01000005.1"/>
</dbReference>
<dbReference type="SMR" id="P14762"/>
<dbReference type="GeneID" id="93642205"/>
<dbReference type="GO" id="GO:0005737">
    <property type="term" value="C:cytoplasm"/>
    <property type="evidence" value="ECO:0007669"/>
    <property type="project" value="UniProtKB-SubCell"/>
</dbReference>
<dbReference type="GO" id="GO:0020037">
    <property type="term" value="F:heme binding"/>
    <property type="evidence" value="ECO:0007669"/>
    <property type="project" value="InterPro"/>
</dbReference>
<dbReference type="GO" id="GO:0005506">
    <property type="term" value="F:iron ion binding"/>
    <property type="evidence" value="ECO:0007669"/>
    <property type="project" value="InterPro"/>
</dbReference>
<dbReference type="GO" id="GO:0004497">
    <property type="term" value="F:monooxygenase activity"/>
    <property type="evidence" value="ECO:0007669"/>
    <property type="project" value="UniProtKB-KW"/>
</dbReference>
<dbReference type="GO" id="GO:0016705">
    <property type="term" value="F:oxidoreductase activity, acting on paired donors, with incorporation or reduction of molecular oxygen"/>
    <property type="evidence" value="ECO:0007669"/>
    <property type="project" value="InterPro"/>
</dbReference>
<dbReference type="CDD" id="cd11032">
    <property type="entry name" value="P450_EryK-like"/>
    <property type="match status" value="1"/>
</dbReference>
<dbReference type="FunFam" id="1.10.630.10:FF:000018">
    <property type="entry name" value="Cytochrome P450 monooxygenase"/>
    <property type="match status" value="1"/>
</dbReference>
<dbReference type="Gene3D" id="1.10.630.10">
    <property type="entry name" value="Cytochrome P450"/>
    <property type="match status" value="1"/>
</dbReference>
<dbReference type="InterPro" id="IPR001128">
    <property type="entry name" value="Cyt_P450"/>
</dbReference>
<dbReference type="InterPro" id="IPR002397">
    <property type="entry name" value="Cyt_P450_B"/>
</dbReference>
<dbReference type="InterPro" id="IPR017972">
    <property type="entry name" value="Cyt_P450_CS"/>
</dbReference>
<dbReference type="InterPro" id="IPR036396">
    <property type="entry name" value="Cyt_P450_sf"/>
</dbReference>
<dbReference type="PANTHER" id="PTHR46696:SF1">
    <property type="entry name" value="CYTOCHROME P450 YJIB-RELATED"/>
    <property type="match status" value="1"/>
</dbReference>
<dbReference type="PANTHER" id="PTHR46696">
    <property type="entry name" value="P450, PUTATIVE (EUROFUNG)-RELATED"/>
    <property type="match status" value="1"/>
</dbReference>
<dbReference type="Pfam" id="PF00067">
    <property type="entry name" value="p450"/>
    <property type="match status" value="1"/>
</dbReference>
<dbReference type="PRINTS" id="PR00359">
    <property type="entry name" value="BP450"/>
</dbReference>
<dbReference type="SUPFAM" id="SSF48264">
    <property type="entry name" value="Cytochrome P450"/>
    <property type="match status" value="1"/>
</dbReference>
<dbReference type="PROSITE" id="PS00086">
    <property type="entry name" value="CYTOCHROME_P450"/>
    <property type="match status" value="1"/>
</dbReference>
<sequence>MNKEVIPVTEIPKFQSRAEEFFPIQWYKEMLNNSPVYFHEETNTWNVFQYEHVKQVLSNYDFFSSDGQRTTIFVGDNSKKKSTSPITNLTNLDPPDHRKARSLLAAAFTPRSLKNWEPRIKQIAADLVEAIQKNSTINIVDDLSSPFPSLVIADLFGVPVKDRYQFKKWVDILFQPYDQERLEEIEQEKQRAGAEYFQYLYPIVIEKRSNLSDDIISDLIQAEVDGETFTDEEIVHATMLLLGAGVETTSHAIANMFYSFLYDDKSLYSELRNNRELAPKAVEEMLRYRFHISRRDRTVKQDNELLGVKLKKGDVVIAWMSACNMDETMFENPFSVDIHRPTNKKHLTFGNGPHFCLGAPLARLEMKIILEAFLEAFSHIEPFEDFELEPHLTASATGQSLTYLPMTVYR</sequence>
<reference key="1">
    <citation type="journal article" date="1989" name="Biochim. Biophys. Acta">
        <title>Molecular cloning, coding nucleotides and the deduced amino acid sequence of P-450BM-1 from Bacillus megaterium.</title>
        <authorList>
            <person name="He J.S."/>
            <person name="Ruettinger R.T."/>
            <person name="Liu H.-M."/>
            <person name="Fulco A.J."/>
        </authorList>
    </citation>
    <scope>NUCLEOTIDE SEQUENCE [GENOMIC DNA]</scope>
    <scope>PROTEIN SEQUENCE OF 1-25</scope>
    <source>
        <strain>ATCC 14581 / DSM 32 / CCUG 1817 / JCM 2506 / NBRC 15308 / NCIMB 9376 / NCTC 10342 / NRRL B-14308 / VKM B-512 / Ford 19</strain>
    </source>
</reference>
<reference key="2">
    <citation type="journal article" date="1995" name="J. Biol. Chem.">
        <title>The molecular cloning and characterization of BM1P1 and BM1P2 proteins, putative positive transcription factors involved in barbiturate-mediated induction of the genes encoding cytochrome P450BM-1 of Bacillus megaterium.</title>
        <authorList>
            <person name="He J.S."/>
            <person name="Liang Q."/>
            <person name="Fulco A.J."/>
        </authorList>
    </citation>
    <scope>NUCLEOTIDE SEQUENCE [GENOMIC DNA] OF 1-25</scope>
    <source>
        <strain>ATCC 14581 / DSM 32 / CCUG 1817 / JCM 2506 / NBRC 15308 / NCIMB 9376 / NCTC 10342 / NRRL B-14308 / VKM B-512 / Ford 19</strain>
    </source>
</reference>
<protein>
    <recommendedName>
        <fullName>Cytochrome P450(BM-1)</fullName>
        <ecNumber>1.14.14.-</ecNumber>
    </recommendedName>
</protein>